<dbReference type="EC" id="2.1.3.15" evidence="1"/>
<dbReference type="EMBL" id="U59237">
    <property type="protein sequence ID" value="AAB82034.1"/>
    <property type="molecule type" value="Genomic_DNA"/>
</dbReference>
<dbReference type="EMBL" id="CP000100">
    <property type="protein sequence ID" value="ABB57986.1"/>
    <property type="molecule type" value="Genomic_DNA"/>
</dbReference>
<dbReference type="RefSeq" id="WP_011244449.1">
    <property type="nucleotide sequence ID" value="NZ_JACJTX010000001.1"/>
</dbReference>
<dbReference type="SMR" id="Q54776"/>
<dbReference type="STRING" id="1140.Synpcc7942_1956"/>
<dbReference type="PaxDb" id="1140-Synpcc7942_1956"/>
<dbReference type="GeneID" id="72430830"/>
<dbReference type="KEGG" id="syf:Synpcc7942_1956"/>
<dbReference type="eggNOG" id="COG0777">
    <property type="taxonomic scope" value="Bacteria"/>
</dbReference>
<dbReference type="HOGENOM" id="CLU_015486_1_1_3"/>
<dbReference type="OrthoDB" id="9772975at2"/>
<dbReference type="BioCyc" id="SYNEL:SYNPCC7942_1956-MONOMER"/>
<dbReference type="UniPathway" id="UPA00655">
    <property type="reaction ID" value="UER00711"/>
</dbReference>
<dbReference type="Proteomes" id="UP000889800">
    <property type="component" value="Chromosome"/>
</dbReference>
<dbReference type="GO" id="GO:0009317">
    <property type="term" value="C:acetyl-CoA carboxylase complex"/>
    <property type="evidence" value="ECO:0007669"/>
    <property type="project" value="InterPro"/>
</dbReference>
<dbReference type="GO" id="GO:0003989">
    <property type="term" value="F:acetyl-CoA carboxylase activity"/>
    <property type="evidence" value="ECO:0007669"/>
    <property type="project" value="InterPro"/>
</dbReference>
<dbReference type="GO" id="GO:0005524">
    <property type="term" value="F:ATP binding"/>
    <property type="evidence" value="ECO:0007669"/>
    <property type="project" value="UniProtKB-KW"/>
</dbReference>
<dbReference type="GO" id="GO:0016743">
    <property type="term" value="F:carboxyl- or carbamoyltransferase activity"/>
    <property type="evidence" value="ECO:0007669"/>
    <property type="project" value="UniProtKB-UniRule"/>
</dbReference>
<dbReference type="GO" id="GO:0008270">
    <property type="term" value="F:zinc ion binding"/>
    <property type="evidence" value="ECO:0007669"/>
    <property type="project" value="UniProtKB-UniRule"/>
</dbReference>
<dbReference type="GO" id="GO:0006633">
    <property type="term" value="P:fatty acid biosynthetic process"/>
    <property type="evidence" value="ECO:0007669"/>
    <property type="project" value="UniProtKB-KW"/>
</dbReference>
<dbReference type="GO" id="GO:2001295">
    <property type="term" value="P:malonyl-CoA biosynthetic process"/>
    <property type="evidence" value="ECO:0007669"/>
    <property type="project" value="UniProtKB-UniRule"/>
</dbReference>
<dbReference type="Gene3D" id="3.90.226.10">
    <property type="entry name" value="2-enoyl-CoA Hydratase, Chain A, domain 1"/>
    <property type="match status" value="1"/>
</dbReference>
<dbReference type="HAMAP" id="MF_01395">
    <property type="entry name" value="AcetylCoA_CT_beta"/>
    <property type="match status" value="1"/>
</dbReference>
<dbReference type="InterPro" id="IPR034733">
    <property type="entry name" value="AcCoA_carboxyl_beta"/>
</dbReference>
<dbReference type="InterPro" id="IPR000438">
    <property type="entry name" value="Acetyl_CoA_COase_Trfase_b_su"/>
</dbReference>
<dbReference type="InterPro" id="IPR029045">
    <property type="entry name" value="ClpP/crotonase-like_dom_sf"/>
</dbReference>
<dbReference type="InterPro" id="IPR011762">
    <property type="entry name" value="COA_CT_N"/>
</dbReference>
<dbReference type="InterPro" id="IPR041010">
    <property type="entry name" value="Znf-ACC"/>
</dbReference>
<dbReference type="NCBIfam" id="TIGR00515">
    <property type="entry name" value="accD"/>
    <property type="match status" value="1"/>
</dbReference>
<dbReference type="PANTHER" id="PTHR42995">
    <property type="entry name" value="ACETYL-COENZYME A CARBOXYLASE CARBOXYL TRANSFERASE SUBUNIT BETA, CHLOROPLASTIC"/>
    <property type="match status" value="1"/>
</dbReference>
<dbReference type="PANTHER" id="PTHR42995:SF5">
    <property type="entry name" value="ACETYL-COENZYME A CARBOXYLASE CARBOXYL TRANSFERASE SUBUNIT BETA, CHLOROPLASTIC"/>
    <property type="match status" value="1"/>
</dbReference>
<dbReference type="Pfam" id="PF01039">
    <property type="entry name" value="Carboxyl_trans"/>
    <property type="match status" value="1"/>
</dbReference>
<dbReference type="Pfam" id="PF17848">
    <property type="entry name" value="Zn_ribbon_ACC"/>
    <property type="match status" value="1"/>
</dbReference>
<dbReference type="PRINTS" id="PR01070">
    <property type="entry name" value="ACCCTRFRASEB"/>
</dbReference>
<dbReference type="SUPFAM" id="SSF52096">
    <property type="entry name" value="ClpP/crotonase"/>
    <property type="match status" value="1"/>
</dbReference>
<dbReference type="PROSITE" id="PS50980">
    <property type="entry name" value="COA_CT_NTER"/>
    <property type="match status" value="1"/>
</dbReference>
<comment type="function">
    <text evidence="1">Component of the acetyl coenzyme A carboxylase (ACC) complex. Biotin carboxylase (BC) catalyzes the carboxylation of biotin on its carrier protein (BCCP) and then the CO(2) group is transferred by the transcarboxylase to acetyl-CoA to form malonyl-CoA.</text>
</comment>
<comment type="catalytic activity">
    <reaction evidence="1">
        <text>N(6)-carboxybiotinyl-L-lysyl-[protein] + acetyl-CoA = N(6)-biotinyl-L-lysyl-[protein] + malonyl-CoA</text>
        <dbReference type="Rhea" id="RHEA:54728"/>
        <dbReference type="Rhea" id="RHEA-COMP:10505"/>
        <dbReference type="Rhea" id="RHEA-COMP:10506"/>
        <dbReference type="ChEBI" id="CHEBI:57288"/>
        <dbReference type="ChEBI" id="CHEBI:57384"/>
        <dbReference type="ChEBI" id="CHEBI:83144"/>
        <dbReference type="ChEBI" id="CHEBI:83145"/>
        <dbReference type="EC" id="2.1.3.15"/>
    </reaction>
</comment>
<comment type="cofactor">
    <cofactor evidence="1">
        <name>Zn(2+)</name>
        <dbReference type="ChEBI" id="CHEBI:29105"/>
    </cofactor>
    <text evidence="1">Binds 1 zinc ion per subunit.</text>
</comment>
<comment type="pathway">
    <text evidence="1">Lipid metabolism; malonyl-CoA biosynthesis; malonyl-CoA from acetyl-CoA: step 1/1.</text>
</comment>
<comment type="subunit">
    <text evidence="1">Acetyl-CoA carboxylase is a heterohexamer composed of biotin carboxyl carrier protein (AccB), biotin carboxylase (AccC) and two subunits each of ACCase subunit alpha (AccA) and ACCase subunit beta (AccD).</text>
</comment>
<comment type="subcellular location">
    <subcellularLocation>
        <location evidence="1">Cytoplasm</location>
    </subcellularLocation>
</comment>
<comment type="similarity">
    <text evidence="1">Belongs to the AccD/PCCB family.</text>
</comment>
<feature type="chain" id="PRO_0000199775" description="Acetyl-coenzyme A carboxylase carboxyl transferase subunit beta">
    <location>
        <begin position="1"/>
        <end position="305"/>
    </location>
</feature>
<feature type="domain" description="CoA carboxyltransferase N-terminal" evidence="2">
    <location>
        <begin position="29"/>
        <end position="298"/>
    </location>
</feature>
<feature type="zinc finger region" description="C4-type" evidence="1">
    <location>
        <begin position="33"/>
        <end position="55"/>
    </location>
</feature>
<feature type="binding site" evidence="1">
    <location>
        <position position="33"/>
    </location>
    <ligand>
        <name>Zn(2+)</name>
        <dbReference type="ChEBI" id="CHEBI:29105"/>
    </ligand>
</feature>
<feature type="binding site" evidence="1">
    <location>
        <position position="36"/>
    </location>
    <ligand>
        <name>Zn(2+)</name>
        <dbReference type="ChEBI" id="CHEBI:29105"/>
    </ligand>
</feature>
<feature type="binding site" evidence="1">
    <location>
        <position position="52"/>
    </location>
    <ligand>
        <name>Zn(2+)</name>
        <dbReference type="ChEBI" id="CHEBI:29105"/>
    </ligand>
</feature>
<feature type="binding site" evidence="1">
    <location>
        <position position="55"/>
    </location>
    <ligand>
        <name>Zn(2+)</name>
        <dbReference type="ChEBI" id="CHEBI:29105"/>
    </ligand>
</feature>
<keyword id="KW-0067">ATP-binding</keyword>
<keyword id="KW-0963">Cytoplasm</keyword>
<keyword id="KW-0275">Fatty acid biosynthesis</keyword>
<keyword id="KW-0276">Fatty acid metabolism</keyword>
<keyword id="KW-0444">Lipid biosynthesis</keyword>
<keyword id="KW-0443">Lipid metabolism</keyword>
<keyword id="KW-0479">Metal-binding</keyword>
<keyword id="KW-0547">Nucleotide-binding</keyword>
<keyword id="KW-1185">Reference proteome</keyword>
<keyword id="KW-0808">Transferase</keyword>
<keyword id="KW-0862">Zinc</keyword>
<keyword id="KW-0863">Zinc-finger</keyword>
<accession>Q54776</accession>
<accession>Q31LT3</accession>
<sequence length="305" mass="33807">MSLLDWFANRRKTEPVVHDYQEREIADGLWTKCESCDALTYTKDLQANLMVCLQCGHHLRIYSDERIRQLIDPGTWQFLDEAVSPTDPLGFRDRKSYSDRLKETQANTGLSDAVRTGVGLLEGQPVALGVMDFRFMGGSMGSVVGEKLTRLIEKGTEQRSPVIIVCASGGARMQEGMLSLMQMAKISGALERHREAGLLYLPILTHPTTGGVTASFAMLGDLIIAEPKALIGFAGRRVIEQTLREKLPDDFQTAEYLQAHGFVDTIVPRTQLKKTLAQLIRLHQPQSPEMKLPLLESSSPATAPL</sequence>
<reference key="1">
    <citation type="submission" date="1996-07" db="EMBL/GenBank/DDBJ databases">
        <title>Genes encoding the beta subunit of carboxyltransferase of the acetyl-CoA carboxylase complex and CTP synthetase from cyanobacterium Synechococcus sp. PCC 7942.</title>
        <authorList>
            <person name="Phung L.T."/>
            <person name="Haselkorn R."/>
        </authorList>
    </citation>
    <scope>NUCLEOTIDE SEQUENCE [GENOMIC DNA]</scope>
</reference>
<reference key="2">
    <citation type="submission" date="2005-08" db="EMBL/GenBank/DDBJ databases">
        <title>Complete sequence of chromosome 1 of Synechococcus elongatus PCC 7942.</title>
        <authorList>
            <consortium name="US DOE Joint Genome Institute"/>
            <person name="Copeland A."/>
            <person name="Lucas S."/>
            <person name="Lapidus A."/>
            <person name="Barry K."/>
            <person name="Detter J.C."/>
            <person name="Glavina T."/>
            <person name="Hammon N."/>
            <person name="Israni S."/>
            <person name="Pitluck S."/>
            <person name="Schmutz J."/>
            <person name="Larimer F."/>
            <person name="Land M."/>
            <person name="Kyrpides N."/>
            <person name="Lykidis A."/>
            <person name="Golden S."/>
            <person name="Richardson P."/>
        </authorList>
    </citation>
    <scope>NUCLEOTIDE SEQUENCE [LARGE SCALE GENOMIC DNA]</scope>
    <source>
        <strain>ATCC 33912 / PCC 7942 / FACHB-805</strain>
    </source>
</reference>
<protein>
    <recommendedName>
        <fullName evidence="1">Acetyl-coenzyme A carboxylase carboxyl transferase subunit beta</fullName>
        <shortName evidence="1">ACCase subunit beta</shortName>
        <shortName evidence="1">Acetyl-CoA carboxylase carboxyltransferase subunit beta</shortName>
        <ecNumber evidence="1">2.1.3.15</ecNumber>
    </recommendedName>
</protein>
<proteinExistence type="inferred from homology"/>
<organism>
    <name type="scientific">Synechococcus elongatus (strain ATCC 33912 / PCC 7942 / FACHB-805)</name>
    <name type="common">Anacystis nidulans R2</name>
    <dbReference type="NCBI Taxonomy" id="1140"/>
    <lineage>
        <taxon>Bacteria</taxon>
        <taxon>Bacillati</taxon>
        <taxon>Cyanobacteriota</taxon>
        <taxon>Cyanophyceae</taxon>
        <taxon>Synechococcales</taxon>
        <taxon>Synechococcaceae</taxon>
        <taxon>Synechococcus</taxon>
    </lineage>
</organism>
<evidence type="ECO:0000255" key="1">
    <source>
        <dbReference type="HAMAP-Rule" id="MF_01395"/>
    </source>
</evidence>
<evidence type="ECO:0000255" key="2">
    <source>
        <dbReference type="PROSITE-ProRule" id="PRU01136"/>
    </source>
</evidence>
<name>ACCD_SYNE7</name>
<gene>
    <name evidence="1" type="primary">accD</name>
    <name type="ordered locus">Synpcc7942_1956</name>
</gene>